<feature type="chain" id="PRO_1000137001" description="UPF0208 membrane protein YfbV">
    <location>
        <begin position="1"/>
        <end position="151"/>
    </location>
</feature>
<feature type="transmembrane region" description="Helical" evidence="1">
    <location>
        <begin position="46"/>
        <end position="65"/>
    </location>
</feature>
<feature type="transmembrane region" description="Helical" evidence="1">
    <location>
        <begin position="69"/>
        <end position="91"/>
    </location>
</feature>
<organism>
    <name type="scientific">Salmonella paratyphi A (strain AKU_12601)</name>
    <dbReference type="NCBI Taxonomy" id="554290"/>
    <lineage>
        <taxon>Bacteria</taxon>
        <taxon>Pseudomonadati</taxon>
        <taxon>Pseudomonadota</taxon>
        <taxon>Gammaproteobacteria</taxon>
        <taxon>Enterobacterales</taxon>
        <taxon>Enterobacteriaceae</taxon>
        <taxon>Salmonella</taxon>
    </lineage>
</organism>
<proteinExistence type="inferred from homology"/>
<sequence>MSTPDNRSVNFFSLFRRGQHYAKTWPMEKRLAPVFVENRVIRMTRYAIRFMPPVAVFTLCWQIALGGQLGPAVATALFALSLPMQGLWWLGKRSVTPLPPSILNWFYEVRGKLQEAGQALAPVEGKPDYQALADTLKRAFKQLDKTFLDDL</sequence>
<reference key="1">
    <citation type="journal article" date="2009" name="BMC Genomics">
        <title>Pseudogene accumulation in the evolutionary histories of Salmonella enterica serovars Paratyphi A and Typhi.</title>
        <authorList>
            <person name="Holt K.E."/>
            <person name="Thomson N.R."/>
            <person name="Wain J."/>
            <person name="Langridge G.C."/>
            <person name="Hasan R."/>
            <person name="Bhutta Z.A."/>
            <person name="Quail M.A."/>
            <person name="Norbertczak H."/>
            <person name="Walker D."/>
            <person name="Simmonds M."/>
            <person name="White B."/>
            <person name="Bason N."/>
            <person name="Mungall K."/>
            <person name="Dougan G."/>
            <person name="Parkhill J."/>
        </authorList>
    </citation>
    <scope>NUCLEOTIDE SEQUENCE [LARGE SCALE GENOMIC DNA]</scope>
    <source>
        <strain>AKU_12601</strain>
    </source>
</reference>
<evidence type="ECO:0000255" key="1">
    <source>
        <dbReference type="HAMAP-Rule" id="MF_01101"/>
    </source>
</evidence>
<dbReference type="EMBL" id="FM200053">
    <property type="protein sequence ID" value="CAR58621.1"/>
    <property type="molecule type" value="Genomic_DNA"/>
</dbReference>
<dbReference type="RefSeq" id="WP_000106617.1">
    <property type="nucleotide sequence ID" value="NC_011147.1"/>
</dbReference>
<dbReference type="KEGG" id="sek:SSPA0492"/>
<dbReference type="HOGENOM" id="CLU_128746_0_0_6"/>
<dbReference type="Proteomes" id="UP000001869">
    <property type="component" value="Chromosome"/>
</dbReference>
<dbReference type="GO" id="GO:0005886">
    <property type="term" value="C:plasma membrane"/>
    <property type="evidence" value="ECO:0007669"/>
    <property type="project" value="UniProtKB-SubCell"/>
</dbReference>
<dbReference type="HAMAP" id="MF_01101">
    <property type="entry name" value="UPF0208"/>
    <property type="match status" value="1"/>
</dbReference>
<dbReference type="InterPro" id="IPR007334">
    <property type="entry name" value="UPF0208"/>
</dbReference>
<dbReference type="NCBIfam" id="NF002493">
    <property type="entry name" value="PRK01816.1"/>
    <property type="match status" value="1"/>
</dbReference>
<dbReference type="Pfam" id="PF04217">
    <property type="entry name" value="DUF412"/>
    <property type="match status" value="1"/>
</dbReference>
<comment type="subcellular location">
    <subcellularLocation>
        <location evidence="1">Cell inner membrane</location>
        <topology evidence="1">Multi-pass membrane protein</topology>
    </subcellularLocation>
</comment>
<comment type="similarity">
    <text evidence="1">Belongs to the UPF0208 family.</text>
</comment>
<keyword id="KW-0997">Cell inner membrane</keyword>
<keyword id="KW-1003">Cell membrane</keyword>
<keyword id="KW-0472">Membrane</keyword>
<keyword id="KW-0812">Transmembrane</keyword>
<keyword id="KW-1133">Transmembrane helix</keyword>
<name>YFBV_SALPK</name>
<protein>
    <recommendedName>
        <fullName evidence="1">UPF0208 membrane protein YfbV</fullName>
    </recommendedName>
</protein>
<gene>
    <name evidence="1" type="primary">yfbV</name>
    <name type="ordered locus">SSPA0492</name>
</gene>
<accession>B5BCL0</accession>